<proteinExistence type="inferred from homology"/>
<organism>
    <name type="scientific">Burkholderia ambifaria (strain ATCC BAA-244 / DSM 16087 / CCUG 44356 / LMG 19182 / AMMD)</name>
    <name type="common">Burkholderia cepacia (strain AMMD)</name>
    <dbReference type="NCBI Taxonomy" id="339670"/>
    <lineage>
        <taxon>Bacteria</taxon>
        <taxon>Pseudomonadati</taxon>
        <taxon>Pseudomonadota</taxon>
        <taxon>Betaproteobacteria</taxon>
        <taxon>Burkholderiales</taxon>
        <taxon>Burkholderiaceae</taxon>
        <taxon>Burkholderia</taxon>
        <taxon>Burkholderia cepacia complex</taxon>
    </lineage>
</organism>
<keyword id="KW-0687">Ribonucleoprotein</keyword>
<keyword id="KW-0689">Ribosomal protein</keyword>
<comment type="similarity">
    <text evidence="1">Belongs to the universal ribosomal protein uL29 family.</text>
</comment>
<name>RL29_BURCM</name>
<protein>
    <recommendedName>
        <fullName evidence="1">Large ribosomal subunit protein uL29</fullName>
    </recommendedName>
    <alternativeName>
        <fullName evidence="2">50S ribosomal protein L29</fullName>
    </alternativeName>
</protein>
<reference key="1">
    <citation type="submission" date="2006-08" db="EMBL/GenBank/DDBJ databases">
        <title>Complete sequence of chromosome 1 of Burkholderia cepacia AMMD.</title>
        <authorList>
            <person name="Copeland A."/>
            <person name="Lucas S."/>
            <person name="Lapidus A."/>
            <person name="Barry K."/>
            <person name="Detter J.C."/>
            <person name="Glavina del Rio T."/>
            <person name="Hammon N."/>
            <person name="Israni S."/>
            <person name="Pitluck S."/>
            <person name="Bruce D."/>
            <person name="Chain P."/>
            <person name="Malfatti S."/>
            <person name="Shin M."/>
            <person name="Vergez L."/>
            <person name="Schmutz J."/>
            <person name="Larimer F."/>
            <person name="Land M."/>
            <person name="Hauser L."/>
            <person name="Kyrpides N."/>
            <person name="Kim E."/>
            <person name="Parke J."/>
            <person name="Coenye T."/>
            <person name="Konstantinidis K."/>
            <person name="Ramette A."/>
            <person name="Tiedje J."/>
            <person name="Richardson P."/>
        </authorList>
    </citation>
    <scope>NUCLEOTIDE SEQUENCE [LARGE SCALE GENOMIC DNA]</scope>
    <source>
        <strain>ATCC BAA-244 / DSM 16087 / CCUG 44356 / LMG 19182 / AMMD</strain>
    </source>
</reference>
<gene>
    <name evidence="1" type="primary">rpmC</name>
    <name type="ordered locus">Bamb_0275</name>
</gene>
<feature type="chain" id="PRO_1000007434" description="Large ribosomal subunit protein uL29">
    <location>
        <begin position="1"/>
        <end position="64"/>
    </location>
</feature>
<accession>Q0BJ38</accession>
<dbReference type="EMBL" id="CP000440">
    <property type="protein sequence ID" value="ABI85835.1"/>
    <property type="molecule type" value="Genomic_DNA"/>
</dbReference>
<dbReference type="RefSeq" id="WP_006400652.1">
    <property type="nucleotide sequence ID" value="NZ_CP009798.1"/>
</dbReference>
<dbReference type="SMR" id="Q0BJ38"/>
<dbReference type="GeneID" id="98107152"/>
<dbReference type="KEGG" id="bam:Bamb_0275"/>
<dbReference type="PATRIC" id="fig|339670.21.peg.1345"/>
<dbReference type="eggNOG" id="COG0255">
    <property type="taxonomic scope" value="Bacteria"/>
</dbReference>
<dbReference type="Proteomes" id="UP000000662">
    <property type="component" value="Chromosome 1"/>
</dbReference>
<dbReference type="GO" id="GO:0022625">
    <property type="term" value="C:cytosolic large ribosomal subunit"/>
    <property type="evidence" value="ECO:0007669"/>
    <property type="project" value="TreeGrafter"/>
</dbReference>
<dbReference type="GO" id="GO:0003735">
    <property type="term" value="F:structural constituent of ribosome"/>
    <property type="evidence" value="ECO:0007669"/>
    <property type="project" value="InterPro"/>
</dbReference>
<dbReference type="GO" id="GO:0006412">
    <property type="term" value="P:translation"/>
    <property type="evidence" value="ECO:0007669"/>
    <property type="project" value="UniProtKB-UniRule"/>
</dbReference>
<dbReference type="CDD" id="cd00427">
    <property type="entry name" value="Ribosomal_L29_HIP"/>
    <property type="match status" value="1"/>
</dbReference>
<dbReference type="FunFam" id="1.10.287.310:FF:000001">
    <property type="entry name" value="50S ribosomal protein L29"/>
    <property type="match status" value="1"/>
</dbReference>
<dbReference type="Gene3D" id="6.10.140.1970">
    <property type="match status" value="1"/>
</dbReference>
<dbReference type="HAMAP" id="MF_00374">
    <property type="entry name" value="Ribosomal_uL29"/>
    <property type="match status" value="1"/>
</dbReference>
<dbReference type="InterPro" id="IPR050063">
    <property type="entry name" value="Ribosomal_protein_uL29"/>
</dbReference>
<dbReference type="InterPro" id="IPR001854">
    <property type="entry name" value="Ribosomal_uL29"/>
</dbReference>
<dbReference type="InterPro" id="IPR018254">
    <property type="entry name" value="Ribosomal_uL29_CS"/>
</dbReference>
<dbReference type="InterPro" id="IPR036049">
    <property type="entry name" value="Ribosomal_uL29_sf"/>
</dbReference>
<dbReference type="NCBIfam" id="TIGR00012">
    <property type="entry name" value="L29"/>
    <property type="match status" value="1"/>
</dbReference>
<dbReference type="PANTHER" id="PTHR10916">
    <property type="entry name" value="60S RIBOSOMAL PROTEIN L35/50S RIBOSOMAL PROTEIN L29"/>
    <property type="match status" value="1"/>
</dbReference>
<dbReference type="PANTHER" id="PTHR10916:SF0">
    <property type="entry name" value="LARGE RIBOSOMAL SUBUNIT PROTEIN UL29C"/>
    <property type="match status" value="1"/>
</dbReference>
<dbReference type="Pfam" id="PF00831">
    <property type="entry name" value="Ribosomal_L29"/>
    <property type="match status" value="1"/>
</dbReference>
<dbReference type="SUPFAM" id="SSF46561">
    <property type="entry name" value="Ribosomal protein L29 (L29p)"/>
    <property type="match status" value="1"/>
</dbReference>
<dbReference type="PROSITE" id="PS00579">
    <property type="entry name" value="RIBOSOMAL_L29"/>
    <property type="match status" value="1"/>
</dbReference>
<evidence type="ECO:0000255" key="1">
    <source>
        <dbReference type="HAMAP-Rule" id="MF_00374"/>
    </source>
</evidence>
<evidence type="ECO:0000305" key="2"/>
<sequence length="64" mass="7312">MKASELLQKDQAALNKELADLLKAQFGLRMQLATQQLTNTSQLKKVRRDIARVRTVMTQKANQK</sequence>